<comment type="function">
    <text evidence="1">Catalyzes the interconversion of beta-pyran and beta-furan forms of D-ribose.</text>
</comment>
<comment type="catalytic activity">
    <reaction evidence="1">
        <text>beta-D-ribopyranose = beta-D-ribofuranose</text>
        <dbReference type="Rhea" id="RHEA:25432"/>
        <dbReference type="ChEBI" id="CHEBI:27476"/>
        <dbReference type="ChEBI" id="CHEBI:47002"/>
        <dbReference type="EC" id="5.4.99.62"/>
    </reaction>
</comment>
<comment type="pathway">
    <text evidence="1">Carbohydrate metabolism; D-ribose degradation; D-ribose 5-phosphate from beta-D-ribopyranose: step 1/2.</text>
</comment>
<comment type="subunit">
    <text evidence="1">Homodecamer.</text>
</comment>
<comment type="subcellular location">
    <subcellularLocation>
        <location evidence="1">Cytoplasm</location>
    </subcellularLocation>
</comment>
<comment type="similarity">
    <text evidence="1">Belongs to the RbsD / FucU family. RbsD subfamily.</text>
</comment>
<protein>
    <recommendedName>
        <fullName evidence="1">D-ribose pyranase</fullName>
        <ecNumber evidence="1">5.4.99.62</ecNumber>
    </recommendedName>
</protein>
<evidence type="ECO:0000255" key="1">
    <source>
        <dbReference type="HAMAP-Rule" id="MF_01661"/>
    </source>
</evidence>
<organism>
    <name type="scientific">Clostridium botulinum (strain Eklund 17B / Type B)</name>
    <dbReference type="NCBI Taxonomy" id="935198"/>
    <lineage>
        <taxon>Bacteria</taxon>
        <taxon>Bacillati</taxon>
        <taxon>Bacillota</taxon>
        <taxon>Clostridia</taxon>
        <taxon>Eubacteriales</taxon>
        <taxon>Clostridiaceae</taxon>
        <taxon>Clostridium</taxon>
    </lineage>
</organism>
<sequence length="131" mass="14403">MRKTALLNSDLSSVISKMGHTDMIAIGDCGLPIPAESERIDLALIKGIPTFMQTLKTTLLELQIEEVILAKETEAVSPDLYEEIKEVIGDVKITFITHEELKTTLKSCKAVVRTGEQTPYANIILKSGVVF</sequence>
<name>RBSD_CLOBB</name>
<reference key="1">
    <citation type="submission" date="2008-04" db="EMBL/GenBank/DDBJ databases">
        <title>Complete sequence of Clostridium botulinum strain Eklund.</title>
        <authorList>
            <person name="Brinkac L.M."/>
            <person name="Brown J.L."/>
            <person name="Bruce D."/>
            <person name="Detter C."/>
            <person name="Munk C."/>
            <person name="Smith L.A."/>
            <person name="Smith T.J."/>
            <person name="Sutton G."/>
            <person name="Brettin T.S."/>
        </authorList>
    </citation>
    <scope>NUCLEOTIDE SEQUENCE [LARGE SCALE GENOMIC DNA]</scope>
    <source>
        <strain>Eklund 17B / Type B</strain>
    </source>
</reference>
<proteinExistence type="inferred from homology"/>
<accession>B2TK87</accession>
<feature type="chain" id="PRO_1000187138" description="D-ribose pyranase">
    <location>
        <begin position="1"/>
        <end position="131"/>
    </location>
</feature>
<feature type="active site" description="Proton donor" evidence="1">
    <location>
        <position position="20"/>
    </location>
</feature>
<feature type="binding site" evidence="1">
    <location>
        <position position="28"/>
    </location>
    <ligand>
        <name>substrate</name>
    </ligand>
</feature>
<feature type="binding site" evidence="1">
    <location>
        <position position="98"/>
    </location>
    <ligand>
        <name>substrate</name>
    </ligand>
</feature>
<feature type="binding site" evidence="1">
    <location>
        <begin position="120"/>
        <end position="122"/>
    </location>
    <ligand>
        <name>substrate</name>
    </ligand>
</feature>
<keyword id="KW-0119">Carbohydrate metabolism</keyword>
<keyword id="KW-0963">Cytoplasm</keyword>
<keyword id="KW-0413">Isomerase</keyword>
<gene>
    <name evidence="1" type="primary">rbsD</name>
    <name type="ordered locus">CLL_A1528</name>
</gene>
<dbReference type="EC" id="5.4.99.62" evidence="1"/>
<dbReference type="EMBL" id="CP001056">
    <property type="protein sequence ID" value="ACD22988.1"/>
    <property type="molecule type" value="Genomic_DNA"/>
</dbReference>
<dbReference type="SMR" id="B2TK87"/>
<dbReference type="KEGG" id="cbk:CLL_A1528"/>
<dbReference type="PATRIC" id="fig|935198.13.peg.1474"/>
<dbReference type="HOGENOM" id="CLU_135498_0_0_9"/>
<dbReference type="UniPathway" id="UPA00916">
    <property type="reaction ID" value="UER00888"/>
</dbReference>
<dbReference type="Proteomes" id="UP000001195">
    <property type="component" value="Chromosome"/>
</dbReference>
<dbReference type="GO" id="GO:0005829">
    <property type="term" value="C:cytosol"/>
    <property type="evidence" value="ECO:0007669"/>
    <property type="project" value="TreeGrafter"/>
</dbReference>
<dbReference type="GO" id="GO:0062193">
    <property type="term" value="F:D-ribose pyranase activity"/>
    <property type="evidence" value="ECO:0007669"/>
    <property type="project" value="UniProtKB-EC"/>
</dbReference>
<dbReference type="GO" id="GO:0016872">
    <property type="term" value="F:intramolecular lyase activity"/>
    <property type="evidence" value="ECO:0007669"/>
    <property type="project" value="UniProtKB-UniRule"/>
</dbReference>
<dbReference type="GO" id="GO:0048029">
    <property type="term" value="F:monosaccharide binding"/>
    <property type="evidence" value="ECO:0007669"/>
    <property type="project" value="InterPro"/>
</dbReference>
<dbReference type="GO" id="GO:0019303">
    <property type="term" value="P:D-ribose catabolic process"/>
    <property type="evidence" value="ECO:0007669"/>
    <property type="project" value="UniProtKB-UniRule"/>
</dbReference>
<dbReference type="Gene3D" id="3.40.1650.10">
    <property type="entry name" value="RbsD-like domain"/>
    <property type="match status" value="1"/>
</dbReference>
<dbReference type="HAMAP" id="MF_01661">
    <property type="entry name" value="D_rib_pyranase"/>
    <property type="match status" value="1"/>
</dbReference>
<dbReference type="InterPro" id="IPR023064">
    <property type="entry name" value="D-ribose_pyranase"/>
</dbReference>
<dbReference type="InterPro" id="IPR023750">
    <property type="entry name" value="RbsD-like_sf"/>
</dbReference>
<dbReference type="InterPro" id="IPR007721">
    <property type="entry name" value="RbsD_FucU"/>
</dbReference>
<dbReference type="NCBIfam" id="NF008761">
    <property type="entry name" value="PRK11797.1"/>
    <property type="match status" value="1"/>
</dbReference>
<dbReference type="PANTHER" id="PTHR37831">
    <property type="entry name" value="D-RIBOSE PYRANASE"/>
    <property type="match status" value="1"/>
</dbReference>
<dbReference type="PANTHER" id="PTHR37831:SF1">
    <property type="entry name" value="D-RIBOSE PYRANASE"/>
    <property type="match status" value="1"/>
</dbReference>
<dbReference type="Pfam" id="PF05025">
    <property type="entry name" value="RbsD_FucU"/>
    <property type="match status" value="1"/>
</dbReference>
<dbReference type="SUPFAM" id="SSF102546">
    <property type="entry name" value="RbsD-like"/>
    <property type="match status" value="1"/>
</dbReference>